<gene>
    <name evidence="1" type="primary">miaA</name>
    <name type="ordered locus">SUB1134</name>
</gene>
<organism>
    <name type="scientific">Streptococcus uberis (strain ATCC BAA-854 / 0140J)</name>
    <dbReference type="NCBI Taxonomy" id="218495"/>
    <lineage>
        <taxon>Bacteria</taxon>
        <taxon>Bacillati</taxon>
        <taxon>Bacillota</taxon>
        <taxon>Bacilli</taxon>
        <taxon>Lactobacillales</taxon>
        <taxon>Streptococcaceae</taxon>
        <taxon>Streptococcus</taxon>
    </lineage>
</organism>
<feature type="chain" id="PRO_0000377339" description="tRNA dimethylallyltransferase">
    <location>
        <begin position="1"/>
        <end position="301"/>
    </location>
</feature>
<feature type="region of interest" description="Interaction with substrate tRNA" evidence="1">
    <location>
        <begin position="37"/>
        <end position="40"/>
    </location>
</feature>
<feature type="binding site" evidence="1">
    <location>
        <begin position="12"/>
        <end position="19"/>
    </location>
    <ligand>
        <name>ATP</name>
        <dbReference type="ChEBI" id="CHEBI:30616"/>
    </ligand>
</feature>
<feature type="binding site" evidence="1">
    <location>
        <begin position="14"/>
        <end position="19"/>
    </location>
    <ligand>
        <name>substrate</name>
    </ligand>
</feature>
<feature type="site" description="Interaction with substrate tRNA" evidence="1">
    <location>
        <position position="103"/>
    </location>
</feature>
<feature type="site" description="Interaction with substrate tRNA" evidence="1">
    <location>
        <position position="129"/>
    </location>
</feature>
<sequence length="301" mass="34654">MTKKEKIIVIVGPTAVGKTALGIQVAQAFNGEIISGDSQQVYCHLDIGTAKASQEEQESAVHHLIDIRDVTQNYSAFDFVQDALEAIKDILSRGKIPIIVGGTGLYIQSLLEGYHLGGNLDQSALLAYRQELESLSDEALLDLMAEKNISLKEWTRRRAIRAIELDRFGKDLQNQEFPYEFMLIGLNDDRSYIYERINQRVDQMLEMGLIEEAKWLYEHYPQVQASRGIGYKELFPYFEGEISLEEASQNLKQNTRRFAKRQLTWFRNRMDVTFYPISEESYPIRIINDIKIFLENKAQDD</sequence>
<accession>B9DUP8</accession>
<protein>
    <recommendedName>
        <fullName evidence="1">tRNA dimethylallyltransferase</fullName>
        <ecNumber evidence="1">2.5.1.75</ecNumber>
    </recommendedName>
    <alternativeName>
        <fullName evidence="1">Dimethylallyl diphosphate:tRNA dimethylallyltransferase</fullName>
        <shortName evidence="1">DMAPP:tRNA dimethylallyltransferase</shortName>
        <shortName evidence="1">DMATase</shortName>
    </alternativeName>
    <alternativeName>
        <fullName evidence="1">Isopentenyl-diphosphate:tRNA isopentenyltransferase</fullName>
        <shortName evidence="1">IPP transferase</shortName>
        <shortName evidence="1">IPPT</shortName>
        <shortName evidence="1">IPTase</shortName>
    </alternativeName>
</protein>
<proteinExistence type="inferred from homology"/>
<name>MIAA_STRU0</name>
<dbReference type="EC" id="2.5.1.75" evidence="1"/>
<dbReference type="EMBL" id="AM946015">
    <property type="protein sequence ID" value="CAR42507.1"/>
    <property type="molecule type" value="Genomic_DNA"/>
</dbReference>
<dbReference type="RefSeq" id="WP_012658621.1">
    <property type="nucleotide sequence ID" value="NC_012004.1"/>
</dbReference>
<dbReference type="SMR" id="B9DUP8"/>
<dbReference type="STRING" id="218495.SUB1134"/>
<dbReference type="KEGG" id="sub:SUB1134"/>
<dbReference type="eggNOG" id="COG0324">
    <property type="taxonomic scope" value="Bacteria"/>
</dbReference>
<dbReference type="HOGENOM" id="CLU_032616_0_1_9"/>
<dbReference type="OrthoDB" id="9776390at2"/>
<dbReference type="Proteomes" id="UP000000449">
    <property type="component" value="Chromosome"/>
</dbReference>
<dbReference type="GO" id="GO:0005524">
    <property type="term" value="F:ATP binding"/>
    <property type="evidence" value="ECO:0007669"/>
    <property type="project" value="UniProtKB-UniRule"/>
</dbReference>
<dbReference type="GO" id="GO:0052381">
    <property type="term" value="F:tRNA dimethylallyltransferase activity"/>
    <property type="evidence" value="ECO:0007669"/>
    <property type="project" value="UniProtKB-UniRule"/>
</dbReference>
<dbReference type="GO" id="GO:0006400">
    <property type="term" value="P:tRNA modification"/>
    <property type="evidence" value="ECO:0007669"/>
    <property type="project" value="TreeGrafter"/>
</dbReference>
<dbReference type="Gene3D" id="3.40.50.300">
    <property type="entry name" value="P-loop containing nucleotide triphosphate hydrolases"/>
    <property type="match status" value="1"/>
</dbReference>
<dbReference type="HAMAP" id="MF_00185">
    <property type="entry name" value="IPP_trans"/>
    <property type="match status" value="1"/>
</dbReference>
<dbReference type="InterPro" id="IPR039657">
    <property type="entry name" value="Dimethylallyltransferase"/>
</dbReference>
<dbReference type="InterPro" id="IPR018022">
    <property type="entry name" value="IPT"/>
</dbReference>
<dbReference type="InterPro" id="IPR027417">
    <property type="entry name" value="P-loop_NTPase"/>
</dbReference>
<dbReference type="NCBIfam" id="TIGR00174">
    <property type="entry name" value="miaA"/>
    <property type="match status" value="1"/>
</dbReference>
<dbReference type="PANTHER" id="PTHR11088">
    <property type="entry name" value="TRNA DIMETHYLALLYLTRANSFERASE"/>
    <property type="match status" value="1"/>
</dbReference>
<dbReference type="PANTHER" id="PTHR11088:SF60">
    <property type="entry name" value="TRNA DIMETHYLALLYLTRANSFERASE"/>
    <property type="match status" value="1"/>
</dbReference>
<dbReference type="Pfam" id="PF01715">
    <property type="entry name" value="IPPT"/>
    <property type="match status" value="1"/>
</dbReference>
<dbReference type="SUPFAM" id="SSF52540">
    <property type="entry name" value="P-loop containing nucleoside triphosphate hydrolases"/>
    <property type="match status" value="2"/>
</dbReference>
<evidence type="ECO:0000255" key="1">
    <source>
        <dbReference type="HAMAP-Rule" id="MF_00185"/>
    </source>
</evidence>
<reference key="1">
    <citation type="journal article" date="2009" name="BMC Genomics">
        <title>Evidence for niche adaptation in the genome of the bovine pathogen Streptococcus uberis.</title>
        <authorList>
            <person name="Ward P.N."/>
            <person name="Holden M.T.G."/>
            <person name="Leigh J.A."/>
            <person name="Lennard N."/>
            <person name="Bignell A."/>
            <person name="Barron A."/>
            <person name="Clark L."/>
            <person name="Quail M.A."/>
            <person name="Woodward J."/>
            <person name="Barrell B.G."/>
            <person name="Egan S.A."/>
            <person name="Field T.R."/>
            <person name="Maskell D."/>
            <person name="Kehoe M."/>
            <person name="Dowson C.G."/>
            <person name="Chanter N."/>
            <person name="Whatmore A.M."/>
            <person name="Bentley S.D."/>
            <person name="Parkhill J."/>
        </authorList>
    </citation>
    <scope>NUCLEOTIDE SEQUENCE [LARGE SCALE GENOMIC DNA]</scope>
    <source>
        <strain>ATCC BAA-854 / 0140J</strain>
    </source>
</reference>
<comment type="function">
    <text evidence="1">Catalyzes the transfer of a dimethylallyl group onto the adenine at position 37 in tRNAs that read codons beginning with uridine, leading to the formation of N6-(dimethylallyl)adenosine (i(6)A).</text>
</comment>
<comment type="catalytic activity">
    <reaction evidence="1">
        <text>adenosine(37) in tRNA + dimethylallyl diphosphate = N(6)-dimethylallyladenosine(37) in tRNA + diphosphate</text>
        <dbReference type="Rhea" id="RHEA:26482"/>
        <dbReference type="Rhea" id="RHEA-COMP:10162"/>
        <dbReference type="Rhea" id="RHEA-COMP:10375"/>
        <dbReference type="ChEBI" id="CHEBI:33019"/>
        <dbReference type="ChEBI" id="CHEBI:57623"/>
        <dbReference type="ChEBI" id="CHEBI:74411"/>
        <dbReference type="ChEBI" id="CHEBI:74415"/>
        <dbReference type="EC" id="2.5.1.75"/>
    </reaction>
</comment>
<comment type="cofactor">
    <cofactor evidence="1">
        <name>Mg(2+)</name>
        <dbReference type="ChEBI" id="CHEBI:18420"/>
    </cofactor>
</comment>
<comment type="subunit">
    <text evidence="1">Monomer.</text>
</comment>
<comment type="similarity">
    <text evidence="1">Belongs to the IPP transferase family.</text>
</comment>
<keyword id="KW-0067">ATP-binding</keyword>
<keyword id="KW-0460">Magnesium</keyword>
<keyword id="KW-0547">Nucleotide-binding</keyword>
<keyword id="KW-1185">Reference proteome</keyword>
<keyword id="KW-0808">Transferase</keyword>
<keyword id="KW-0819">tRNA processing</keyword>